<feature type="chain" id="PRO_0000162950" description="NADPH-dependent 7-cyano-7-deazaguanine reductase">
    <location>
        <begin position="1"/>
        <end position="165"/>
    </location>
</feature>
<feature type="active site" description="Thioimide intermediate" evidence="1">
    <location>
        <position position="56"/>
    </location>
</feature>
<feature type="active site" description="Proton donor" evidence="1">
    <location>
        <position position="63"/>
    </location>
</feature>
<feature type="binding site" evidence="1">
    <location>
        <begin position="78"/>
        <end position="80"/>
    </location>
    <ligand>
        <name>substrate</name>
    </ligand>
</feature>
<feature type="binding site" evidence="1">
    <location>
        <begin position="97"/>
        <end position="98"/>
    </location>
    <ligand>
        <name>substrate</name>
    </ligand>
</feature>
<reference key="1">
    <citation type="journal article" date="2003" name="Nature">
        <title>The genome sequence of Bacillus anthracis Ames and comparison to closely related bacteria.</title>
        <authorList>
            <person name="Read T.D."/>
            <person name="Peterson S.N."/>
            <person name="Tourasse N.J."/>
            <person name="Baillie L.W."/>
            <person name="Paulsen I.T."/>
            <person name="Nelson K.E."/>
            <person name="Tettelin H."/>
            <person name="Fouts D.E."/>
            <person name="Eisen J.A."/>
            <person name="Gill S.R."/>
            <person name="Holtzapple E.K."/>
            <person name="Okstad O.A."/>
            <person name="Helgason E."/>
            <person name="Rilstone J."/>
            <person name="Wu M."/>
            <person name="Kolonay J.F."/>
            <person name="Beanan M.J."/>
            <person name="Dodson R.J."/>
            <person name="Brinkac L.M."/>
            <person name="Gwinn M.L."/>
            <person name="DeBoy R.T."/>
            <person name="Madpu R."/>
            <person name="Daugherty S.C."/>
            <person name="Durkin A.S."/>
            <person name="Haft D.H."/>
            <person name="Nelson W.C."/>
            <person name="Peterson J.D."/>
            <person name="Pop M."/>
            <person name="Khouri H.M."/>
            <person name="Radune D."/>
            <person name="Benton J.L."/>
            <person name="Mahamoud Y."/>
            <person name="Jiang L."/>
            <person name="Hance I.R."/>
            <person name="Weidman J.F."/>
            <person name="Berry K.J."/>
            <person name="Plaut R.D."/>
            <person name="Wolf A.M."/>
            <person name="Watkins K.L."/>
            <person name="Nierman W.C."/>
            <person name="Hazen A."/>
            <person name="Cline R.T."/>
            <person name="Redmond C."/>
            <person name="Thwaite J.E."/>
            <person name="White O."/>
            <person name="Salzberg S.L."/>
            <person name="Thomason B."/>
            <person name="Friedlander A.M."/>
            <person name="Koehler T.M."/>
            <person name="Hanna P.C."/>
            <person name="Kolstoe A.-B."/>
            <person name="Fraser C.M."/>
        </authorList>
    </citation>
    <scope>NUCLEOTIDE SEQUENCE [LARGE SCALE GENOMIC DNA]</scope>
    <source>
        <strain>Ames / isolate Porton</strain>
    </source>
</reference>
<reference key="2">
    <citation type="journal article" date="2009" name="J. Bacteriol.">
        <title>The complete genome sequence of Bacillus anthracis Ames 'Ancestor'.</title>
        <authorList>
            <person name="Ravel J."/>
            <person name="Jiang L."/>
            <person name="Stanley S.T."/>
            <person name="Wilson M.R."/>
            <person name="Decker R.S."/>
            <person name="Read T.D."/>
            <person name="Worsham P."/>
            <person name="Keim P.S."/>
            <person name="Salzberg S.L."/>
            <person name="Fraser-Liggett C.M."/>
            <person name="Rasko D.A."/>
        </authorList>
    </citation>
    <scope>NUCLEOTIDE SEQUENCE [LARGE SCALE GENOMIC DNA]</scope>
    <source>
        <strain>Ames ancestor</strain>
    </source>
</reference>
<reference key="3">
    <citation type="submission" date="2004-01" db="EMBL/GenBank/DDBJ databases">
        <title>Complete genome sequence of Bacillus anthracis Sterne.</title>
        <authorList>
            <person name="Brettin T.S."/>
            <person name="Bruce D."/>
            <person name="Challacombe J.F."/>
            <person name="Gilna P."/>
            <person name="Han C."/>
            <person name="Hill K."/>
            <person name="Hitchcock P."/>
            <person name="Jackson P."/>
            <person name="Keim P."/>
            <person name="Longmire J."/>
            <person name="Lucas S."/>
            <person name="Okinaka R."/>
            <person name="Richardson P."/>
            <person name="Rubin E."/>
            <person name="Tice H."/>
        </authorList>
    </citation>
    <scope>NUCLEOTIDE SEQUENCE [LARGE SCALE GENOMIC DNA]</scope>
    <source>
        <strain>Sterne</strain>
    </source>
</reference>
<comment type="function">
    <text evidence="1">Catalyzes the NADPH-dependent reduction of 7-cyano-7-deazaguanine (preQ0) to 7-aminomethyl-7-deazaguanine (preQ1).</text>
</comment>
<comment type="catalytic activity">
    <reaction evidence="1">
        <text>7-aminomethyl-7-carbaguanine + 2 NADP(+) = 7-cyano-7-deazaguanine + 2 NADPH + 3 H(+)</text>
        <dbReference type="Rhea" id="RHEA:13409"/>
        <dbReference type="ChEBI" id="CHEBI:15378"/>
        <dbReference type="ChEBI" id="CHEBI:45075"/>
        <dbReference type="ChEBI" id="CHEBI:57783"/>
        <dbReference type="ChEBI" id="CHEBI:58349"/>
        <dbReference type="ChEBI" id="CHEBI:58703"/>
        <dbReference type="EC" id="1.7.1.13"/>
    </reaction>
</comment>
<comment type="pathway">
    <text evidence="1">tRNA modification; tRNA-queuosine biosynthesis.</text>
</comment>
<comment type="subcellular location">
    <subcellularLocation>
        <location evidence="1">Cytoplasm</location>
    </subcellularLocation>
</comment>
<comment type="similarity">
    <text evidence="1">Belongs to the GTP cyclohydrolase I family. QueF type 1 subfamily.</text>
</comment>
<organism>
    <name type="scientific">Bacillus anthracis</name>
    <dbReference type="NCBI Taxonomy" id="1392"/>
    <lineage>
        <taxon>Bacteria</taxon>
        <taxon>Bacillati</taxon>
        <taxon>Bacillota</taxon>
        <taxon>Bacilli</taxon>
        <taxon>Bacillales</taxon>
        <taxon>Bacillaceae</taxon>
        <taxon>Bacillus</taxon>
        <taxon>Bacillus cereus group</taxon>
    </lineage>
</organism>
<proteinExistence type="inferred from homology"/>
<accession>Q81TC4</accession>
<accession>Q6I1K1</accession>
<accession>Q6KVF0</accession>
<sequence length="165" mass="19528">MAGRLDEDLKDVTLLGNQNTKYLFEYSPEILEVFDNNHPNRDYFVKFNCPEFTSLCPKTGQPDFATIYISYIPEQRMVESKSLKLYLFSFRNHGDFHEDCMNVIMNDLIKLMDPRYIEVWGKFTPRGGISIDPYCNYGRPGTKYEQMADYRMMNHDLYPETIDNR</sequence>
<dbReference type="EC" id="1.7.1.13" evidence="1"/>
<dbReference type="EMBL" id="AE016879">
    <property type="protein sequence ID" value="AAP25306.1"/>
    <property type="molecule type" value="Genomic_DNA"/>
</dbReference>
<dbReference type="EMBL" id="AE017334">
    <property type="protein sequence ID" value="AAT30456.1"/>
    <property type="molecule type" value="Genomic_DNA"/>
</dbReference>
<dbReference type="EMBL" id="AE017225">
    <property type="protein sequence ID" value="AAT53580.1"/>
    <property type="molecule type" value="Genomic_DNA"/>
</dbReference>
<dbReference type="RefSeq" id="NP_843820.1">
    <property type="nucleotide sequence ID" value="NC_003997.3"/>
</dbReference>
<dbReference type="RefSeq" id="WP_000918895.1">
    <property type="nucleotide sequence ID" value="NZ_WXXJ01000001.1"/>
</dbReference>
<dbReference type="RefSeq" id="YP_027529.1">
    <property type="nucleotide sequence ID" value="NC_005945.1"/>
</dbReference>
<dbReference type="SMR" id="Q81TC4"/>
<dbReference type="STRING" id="261594.GBAA_1362"/>
<dbReference type="DNASU" id="1086017"/>
<dbReference type="GeneID" id="93009696"/>
<dbReference type="KEGG" id="ban:BA_1362"/>
<dbReference type="KEGG" id="bar:GBAA_1362"/>
<dbReference type="KEGG" id="bat:BAS1260"/>
<dbReference type="PATRIC" id="fig|198094.11.peg.1335"/>
<dbReference type="eggNOG" id="COG0780">
    <property type="taxonomic scope" value="Bacteria"/>
</dbReference>
<dbReference type="HOGENOM" id="CLU_102489_0_1_9"/>
<dbReference type="OMA" id="KEFTSLC"/>
<dbReference type="OrthoDB" id="9795077at2"/>
<dbReference type="UniPathway" id="UPA00392"/>
<dbReference type="Proteomes" id="UP000000427">
    <property type="component" value="Chromosome"/>
</dbReference>
<dbReference type="Proteomes" id="UP000000594">
    <property type="component" value="Chromosome"/>
</dbReference>
<dbReference type="GO" id="GO:0005737">
    <property type="term" value="C:cytoplasm"/>
    <property type="evidence" value="ECO:0007669"/>
    <property type="project" value="UniProtKB-SubCell"/>
</dbReference>
<dbReference type="GO" id="GO:0033739">
    <property type="term" value="F:preQ1 synthase activity"/>
    <property type="evidence" value="ECO:0007669"/>
    <property type="project" value="UniProtKB-UniRule"/>
</dbReference>
<dbReference type="GO" id="GO:0008616">
    <property type="term" value="P:queuosine biosynthetic process"/>
    <property type="evidence" value="ECO:0007669"/>
    <property type="project" value="UniProtKB-UniRule"/>
</dbReference>
<dbReference type="GO" id="GO:0006400">
    <property type="term" value="P:tRNA modification"/>
    <property type="evidence" value="ECO:0007669"/>
    <property type="project" value="UniProtKB-UniRule"/>
</dbReference>
<dbReference type="Gene3D" id="3.30.1130.10">
    <property type="match status" value="1"/>
</dbReference>
<dbReference type="HAMAP" id="MF_00818">
    <property type="entry name" value="QueF_type1"/>
    <property type="match status" value="1"/>
</dbReference>
<dbReference type="InterPro" id="IPR043133">
    <property type="entry name" value="GTP-CH-I_C/QueF"/>
</dbReference>
<dbReference type="InterPro" id="IPR050084">
    <property type="entry name" value="NADPH_dep_7-cyano-7-deazaG_red"/>
</dbReference>
<dbReference type="InterPro" id="IPR029500">
    <property type="entry name" value="QueF"/>
</dbReference>
<dbReference type="InterPro" id="IPR016856">
    <property type="entry name" value="QueF_type1"/>
</dbReference>
<dbReference type="NCBIfam" id="TIGR03139">
    <property type="entry name" value="QueF-II"/>
    <property type="match status" value="1"/>
</dbReference>
<dbReference type="PANTHER" id="PTHR34354">
    <property type="entry name" value="NADPH-DEPENDENT 7-CYANO-7-DEAZAGUANINE REDUCTASE"/>
    <property type="match status" value="1"/>
</dbReference>
<dbReference type="PANTHER" id="PTHR34354:SF1">
    <property type="entry name" value="NADPH-DEPENDENT 7-CYANO-7-DEAZAGUANINE REDUCTASE"/>
    <property type="match status" value="1"/>
</dbReference>
<dbReference type="Pfam" id="PF14489">
    <property type="entry name" value="QueF"/>
    <property type="match status" value="1"/>
</dbReference>
<dbReference type="PIRSF" id="PIRSF027377">
    <property type="entry name" value="Nitrile_oxidored_QueF"/>
    <property type="match status" value="1"/>
</dbReference>
<dbReference type="SUPFAM" id="SSF55620">
    <property type="entry name" value="Tetrahydrobiopterin biosynthesis enzymes-like"/>
    <property type="match status" value="1"/>
</dbReference>
<name>QUEF_BACAN</name>
<protein>
    <recommendedName>
        <fullName evidence="1">NADPH-dependent 7-cyano-7-deazaguanine reductase</fullName>
        <ecNumber evidence="1">1.7.1.13</ecNumber>
    </recommendedName>
    <alternativeName>
        <fullName evidence="1">7-cyano-7-carbaguanine reductase</fullName>
    </alternativeName>
    <alternativeName>
        <fullName evidence="1">NADPH-dependent nitrile oxidoreductase</fullName>
    </alternativeName>
    <alternativeName>
        <fullName evidence="1">PreQ(0) reductase</fullName>
    </alternativeName>
</protein>
<gene>
    <name evidence="1" type="primary">queF</name>
    <name type="ordered locus">BA_1362</name>
    <name type="ordered locus">GBAA_1362</name>
    <name type="ordered locus">BAS1260</name>
</gene>
<evidence type="ECO:0000255" key="1">
    <source>
        <dbReference type="HAMAP-Rule" id="MF_00818"/>
    </source>
</evidence>
<keyword id="KW-0963">Cytoplasm</keyword>
<keyword id="KW-0521">NADP</keyword>
<keyword id="KW-0560">Oxidoreductase</keyword>
<keyword id="KW-0671">Queuosine biosynthesis</keyword>
<keyword id="KW-1185">Reference proteome</keyword>